<sequence length="311" mass="32892">MTQKIKCALIGPGNIGTDLLAKLQRSPVLEPVWMVGIDPESDGLRRAREMGIKTTAEGVDGLLPHVLADGVQIAFDATSAYVHAENSRKLNALGVLMIDLTPAAIGPYCVPPVNLKEHLGRAEMNVNMVTCGGQATIPMVAAVSRVQPVAYGEIVATVSSRSVGPGTRKNIDEFTRTTAGAVERVGGAKKGKAIIVINPAEPPLIMRDTVHCLTETEPDQAAITASIQAMIKEVQKYVPGYKLVNGPVFDGNRVSVFLEVEGLGDYLPKYAGNLDIMTAAAARTAEMFAEEMIKGELNLRAGTAASATETA</sequence>
<name>ACDH_RALPJ</name>
<dbReference type="EC" id="1.2.1.10" evidence="1"/>
<dbReference type="EMBL" id="CP001069">
    <property type="protein sequence ID" value="ACD29703.1"/>
    <property type="molecule type" value="Genomic_DNA"/>
</dbReference>
<dbReference type="SMR" id="B2UJF2"/>
<dbReference type="STRING" id="402626.Rpic_4618"/>
<dbReference type="KEGG" id="rpi:Rpic_4618"/>
<dbReference type="eggNOG" id="COG4569">
    <property type="taxonomic scope" value="Bacteria"/>
</dbReference>
<dbReference type="HOGENOM" id="CLU_062208_0_0_4"/>
<dbReference type="GO" id="GO:0008774">
    <property type="term" value="F:acetaldehyde dehydrogenase (acetylating) activity"/>
    <property type="evidence" value="ECO:0007669"/>
    <property type="project" value="UniProtKB-UniRule"/>
</dbReference>
<dbReference type="GO" id="GO:0051287">
    <property type="term" value="F:NAD binding"/>
    <property type="evidence" value="ECO:0007669"/>
    <property type="project" value="UniProtKB-UniRule"/>
</dbReference>
<dbReference type="GO" id="GO:0009056">
    <property type="term" value="P:catabolic process"/>
    <property type="evidence" value="ECO:0007669"/>
    <property type="project" value="UniProtKB-KW"/>
</dbReference>
<dbReference type="CDD" id="cd23933">
    <property type="entry name" value="ALDH_C"/>
    <property type="match status" value="1"/>
</dbReference>
<dbReference type="Gene3D" id="3.30.360.10">
    <property type="entry name" value="Dihydrodipicolinate Reductase, domain 2"/>
    <property type="match status" value="1"/>
</dbReference>
<dbReference type="Gene3D" id="3.40.50.720">
    <property type="entry name" value="NAD(P)-binding Rossmann-like Domain"/>
    <property type="match status" value="1"/>
</dbReference>
<dbReference type="HAMAP" id="MF_01657">
    <property type="entry name" value="Ac_ald_DH_ac"/>
    <property type="match status" value="1"/>
</dbReference>
<dbReference type="InterPro" id="IPR003361">
    <property type="entry name" value="Acetaldehyde_dehydrogenase"/>
</dbReference>
<dbReference type="InterPro" id="IPR015426">
    <property type="entry name" value="Acetylaldehyde_DH_C"/>
</dbReference>
<dbReference type="InterPro" id="IPR036291">
    <property type="entry name" value="NAD(P)-bd_dom_sf"/>
</dbReference>
<dbReference type="InterPro" id="IPR000534">
    <property type="entry name" value="Semialdehyde_DH_NAD-bd"/>
</dbReference>
<dbReference type="NCBIfam" id="TIGR03215">
    <property type="entry name" value="ac_ald_DH_ac"/>
    <property type="match status" value="1"/>
</dbReference>
<dbReference type="NCBIfam" id="NF006157">
    <property type="entry name" value="PRK08300.1"/>
    <property type="match status" value="1"/>
</dbReference>
<dbReference type="Pfam" id="PF09290">
    <property type="entry name" value="AcetDehyd-dimer"/>
    <property type="match status" value="1"/>
</dbReference>
<dbReference type="Pfam" id="PF01118">
    <property type="entry name" value="Semialdhyde_dh"/>
    <property type="match status" value="1"/>
</dbReference>
<dbReference type="PIRSF" id="PIRSF015689">
    <property type="entry name" value="Actaldh_dh_actl"/>
    <property type="match status" value="1"/>
</dbReference>
<dbReference type="SMART" id="SM00859">
    <property type="entry name" value="Semialdhyde_dh"/>
    <property type="match status" value="1"/>
</dbReference>
<dbReference type="SUPFAM" id="SSF55347">
    <property type="entry name" value="Glyceraldehyde-3-phosphate dehydrogenase-like, C-terminal domain"/>
    <property type="match status" value="1"/>
</dbReference>
<dbReference type="SUPFAM" id="SSF51735">
    <property type="entry name" value="NAD(P)-binding Rossmann-fold domains"/>
    <property type="match status" value="1"/>
</dbReference>
<reference key="1">
    <citation type="submission" date="2008-05" db="EMBL/GenBank/DDBJ databases">
        <title>Complete sequence of chromosome 2 of Ralstonia pickettii 12J.</title>
        <authorList>
            <person name="Lucas S."/>
            <person name="Copeland A."/>
            <person name="Lapidus A."/>
            <person name="Glavina del Rio T."/>
            <person name="Dalin E."/>
            <person name="Tice H."/>
            <person name="Bruce D."/>
            <person name="Goodwin L."/>
            <person name="Pitluck S."/>
            <person name="Meincke L."/>
            <person name="Brettin T."/>
            <person name="Detter J.C."/>
            <person name="Han C."/>
            <person name="Kuske C.R."/>
            <person name="Schmutz J."/>
            <person name="Larimer F."/>
            <person name="Land M."/>
            <person name="Hauser L."/>
            <person name="Kyrpides N."/>
            <person name="Mikhailova N."/>
            <person name="Marsh T."/>
            <person name="Richardson P."/>
        </authorList>
    </citation>
    <scope>NUCLEOTIDE SEQUENCE [LARGE SCALE GENOMIC DNA]</scope>
    <source>
        <strain>12J</strain>
    </source>
</reference>
<feature type="chain" id="PRO_0000387716" description="Acetaldehyde dehydrogenase">
    <location>
        <begin position="1"/>
        <end position="311"/>
    </location>
</feature>
<feature type="active site" description="Acyl-thioester intermediate" evidence="1">
    <location>
        <position position="131"/>
    </location>
</feature>
<feature type="binding site" evidence="1">
    <location>
        <begin position="162"/>
        <end position="170"/>
    </location>
    <ligand>
        <name>NAD(+)</name>
        <dbReference type="ChEBI" id="CHEBI:57540"/>
    </ligand>
</feature>
<feature type="binding site" evidence="1">
    <location>
        <position position="273"/>
    </location>
    <ligand>
        <name>NAD(+)</name>
        <dbReference type="ChEBI" id="CHEBI:57540"/>
    </ligand>
</feature>
<comment type="catalytic activity">
    <reaction evidence="1">
        <text>acetaldehyde + NAD(+) + CoA = acetyl-CoA + NADH + H(+)</text>
        <dbReference type="Rhea" id="RHEA:23288"/>
        <dbReference type="ChEBI" id="CHEBI:15343"/>
        <dbReference type="ChEBI" id="CHEBI:15378"/>
        <dbReference type="ChEBI" id="CHEBI:57287"/>
        <dbReference type="ChEBI" id="CHEBI:57288"/>
        <dbReference type="ChEBI" id="CHEBI:57540"/>
        <dbReference type="ChEBI" id="CHEBI:57945"/>
        <dbReference type="EC" id="1.2.1.10"/>
    </reaction>
</comment>
<comment type="similarity">
    <text evidence="1">Belongs to the acetaldehyde dehydrogenase family.</text>
</comment>
<keyword id="KW-0058">Aromatic hydrocarbons catabolism</keyword>
<keyword id="KW-0520">NAD</keyword>
<keyword id="KW-0560">Oxidoreductase</keyword>
<protein>
    <recommendedName>
        <fullName evidence="1">Acetaldehyde dehydrogenase</fullName>
        <ecNumber evidence="1">1.2.1.10</ecNumber>
    </recommendedName>
    <alternativeName>
        <fullName evidence="1">Acetaldehyde dehydrogenase [acetylating]</fullName>
    </alternativeName>
</protein>
<evidence type="ECO:0000255" key="1">
    <source>
        <dbReference type="HAMAP-Rule" id="MF_01657"/>
    </source>
</evidence>
<gene>
    <name type="ordered locus">Rpic_4618</name>
</gene>
<proteinExistence type="inferred from homology"/>
<organism>
    <name type="scientific">Ralstonia pickettii (strain 12J)</name>
    <dbReference type="NCBI Taxonomy" id="402626"/>
    <lineage>
        <taxon>Bacteria</taxon>
        <taxon>Pseudomonadati</taxon>
        <taxon>Pseudomonadota</taxon>
        <taxon>Betaproteobacteria</taxon>
        <taxon>Burkholderiales</taxon>
        <taxon>Burkholderiaceae</taxon>
        <taxon>Ralstonia</taxon>
    </lineage>
</organism>
<accession>B2UJF2</accession>